<sequence length="306" mass="32909">MPFLELTLRCTEATQPRYENALEDVGALAVTLLDAEADTSNEQAILEPGVGETPLWDTLVLSALFPADSNALLLLAALEAFDPELDWSSGSFRAVEDEDWERAWLDQFQPMAFGSRTWIVPWNHELPEAAQAADAAVVRLDPGLAFGSGTHPTTALCLRWLDQLAVDGLLQGQRVLDFGCGSGILALAALKLGAAEAIGVDNDPQALVATADNAERNGEQARMHVYLPPDEPVATYPIVVANILASALDALAELLAARVAAGGRIALSGILHGQEGELLQRYAEWFDDLQATQDGDWMRITGVRRA</sequence>
<feature type="chain" id="PRO_1000132831" description="Ribosomal protein L11 methyltransferase">
    <location>
        <begin position="1"/>
        <end position="306"/>
    </location>
</feature>
<feature type="binding site" evidence="1">
    <location>
        <position position="154"/>
    </location>
    <ligand>
        <name>S-adenosyl-L-methionine</name>
        <dbReference type="ChEBI" id="CHEBI:59789"/>
    </ligand>
</feature>
<feature type="binding site" evidence="1">
    <location>
        <position position="179"/>
    </location>
    <ligand>
        <name>S-adenosyl-L-methionine</name>
        <dbReference type="ChEBI" id="CHEBI:59789"/>
    </ligand>
</feature>
<feature type="binding site" evidence="1">
    <location>
        <position position="201"/>
    </location>
    <ligand>
        <name>S-adenosyl-L-methionine</name>
        <dbReference type="ChEBI" id="CHEBI:59789"/>
    </ligand>
</feature>
<feature type="binding site" evidence="1">
    <location>
        <position position="242"/>
    </location>
    <ligand>
        <name>S-adenosyl-L-methionine</name>
        <dbReference type="ChEBI" id="CHEBI:59789"/>
    </ligand>
</feature>
<accession>B2FJP0</accession>
<keyword id="KW-0963">Cytoplasm</keyword>
<keyword id="KW-0489">Methyltransferase</keyword>
<keyword id="KW-1185">Reference proteome</keyword>
<keyword id="KW-0949">S-adenosyl-L-methionine</keyword>
<keyword id="KW-0808">Transferase</keyword>
<proteinExistence type="inferred from homology"/>
<organism>
    <name type="scientific">Stenotrophomonas maltophilia (strain K279a)</name>
    <dbReference type="NCBI Taxonomy" id="522373"/>
    <lineage>
        <taxon>Bacteria</taxon>
        <taxon>Pseudomonadati</taxon>
        <taxon>Pseudomonadota</taxon>
        <taxon>Gammaproteobacteria</taxon>
        <taxon>Lysobacterales</taxon>
        <taxon>Lysobacteraceae</taxon>
        <taxon>Stenotrophomonas</taxon>
        <taxon>Stenotrophomonas maltophilia group</taxon>
    </lineage>
</organism>
<name>PRMA_STRMK</name>
<reference key="1">
    <citation type="journal article" date="2008" name="Genome Biol.">
        <title>The complete genome, comparative and functional analysis of Stenotrophomonas maltophilia reveals an organism heavily shielded by drug resistance determinants.</title>
        <authorList>
            <person name="Crossman L.C."/>
            <person name="Gould V.C."/>
            <person name="Dow J.M."/>
            <person name="Vernikos G.S."/>
            <person name="Okazaki A."/>
            <person name="Sebaihia M."/>
            <person name="Saunders D."/>
            <person name="Arrowsmith C."/>
            <person name="Carver T."/>
            <person name="Peters N."/>
            <person name="Adlem E."/>
            <person name="Kerhornou A."/>
            <person name="Lord A."/>
            <person name="Murphy L."/>
            <person name="Seeger K."/>
            <person name="Squares R."/>
            <person name="Rutter S."/>
            <person name="Quail M.A."/>
            <person name="Rajandream M.A."/>
            <person name="Harris D."/>
            <person name="Churcher C."/>
            <person name="Bentley S.D."/>
            <person name="Parkhill J."/>
            <person name="Thomson N.R."/>
            <person name="Avison M.B."/>
        </authorList>
    </citation>
    <scope>NUCLEOTIDE SEQUENCE [LARGE SCALE GENOMIC DNA]</scope>
    <source>
        <strain>K279a</strain>
    </source>
</reference>
<gene>
    <name evidence="1" type="primary">prmA</name>
    <name type="ordered locus">Smlt4244</name>
</gene>
<comment type="function">
    <text evidence="1">Methylates ribosomal protein L11.</text>
</comment>
<comment type="catalytic activity">
    <reaction evidence="1">
        <text>L-lysyl-[protein] + 3 S-adenosyl-L-methionine = N(6),N(6),N(6)-trimethyl-L-lysyl-[protein] + 3 S-adenosyl-L-homocysteine + 3 H(+)</text>
        <dbReference type="Rhea" id="RHEA:54192"/>
        <dbReference type="Rhea" id="RHEA-COMP:9752"/>
        <dbReference type="Rhea" id="RHEA-COMP:13826"/>
        <dbReference type="ChEBI" id="CHEBI:15378"/>
        <dbReference type="ChEBI" id="CHEBI:29969"/>
        <dbReference type="ChEBI" id="CHEBI:57856"/>
        <dbReference type="ChEBI" id="CHEBI:59789"/>
        <dbReference type="ChEBI" id="CHEBI:61961"/>
    </reaction>
</comment>
<comment type="subcellular location">
    <subcellularLocation>
        <location evidence="1">Cytoplasm</location>
    </subcellularLocation>
</comment>
<comment type="similarity">
    <text evidence="1">Belongs to the methyltransferase superfamily. PrmA family.</text>
</comment>
<dbReference type="EC" id="2.1.1.-" evidence="1"/>
<dbReference type="EMBL" id="AM743169">
    <property type="protein sequence ID" value="CAQ47633.1"/>
    <property type="molecule type" value="Genomic_DNA"/>
</dbReference>
<dbReference type="RefSeq" id="WP_012481409.1">
    <property type="nucleotide sequence ID" value="NC_010943.1"/>
</dbReference>
<dbReference type="SMR" id="B2FJP0"/>
<dbReference type="EnsemblBacteria" id="CAQ47633">
    <property type="protein sequence ID" value="CAQ47633"/>
    <property type="gene ID" value="Smlt4244"/>
</dbReference>
<dbReference type="GeneID" id="93835203"/>
<dbReference type="KEGG" id="sml:Smlt4244"/>
<dbReference type="eggNOG" id="COG2264">
    <property type="taxonomic scope" value="Bacteria"/>
</dbReference>
<dbReference type="HOGENOM" id="CLU_049382_4_1_6"/>
<dbReference type="Proteomes" id="UP000008840">
    <property type="component" value="Chromosome"/>
</dbReference>
<dbReference type="GO" id="GO:0005829">
    <property type="term" value="C:cytosol"/>
    <property type="evidence" value="ECO:0007669"/>
    <property type="project" value="TreeGrafter"/>
</dbReference>
<dbReference type="GO" id="GO:0016279">
    <property type="term" value="F:protein-lysine N-methyltransferase activity"/>
    <property type="evidence" value="ECO:0007669"/>
    <property type="project" value="TreeGrafter"/>
</dbReference>
<dbReference type="GO" id="GO:0032259">
    <property type="term" value="P:methylation"/>
    <property type="evidence" value="ECO:0007669"/>
    <property type="project" value="UniProtKB-KW"/>
</dbReference>
<dbReference type="Gene3D" id="3.40.50.150">
    <property type="entry name" value="Vaccinia Virus protein VP39"/>
    <property type="match status" value="1"/>
</dbReference>
<dbReference type="HAMAP" id="MF_00735">
    <property type="entry name" value="Methyltr_PrmA"/>
    <property type="match status" value="1"/>
</dbReference>
<dbReference type="InterPro" id="IPR050078">
    <property type="entry name" value="Ribosomal_L11_MeTrfase_PrmA"/>
</dbReference>
<dbReference type="InterPro" id="IPR004498">
    <property type="entry name" value="Ribosomal_PrmA_MeTrfase"/>
</dbReference>
<dbReference type="InterPro" id="IPR029063">
    <property type="entry name" value="SAM-dependent_MTases_sf"/>
</dbReference>
<dbReference type="NCBIfam" id="TIGR00406">
    <property type="entry name" value="prmA"/>
    <property type="match status" value="1"/>
</dbReference>
<dbReference type="PANTHER" id="PTHR43648">
    <property type="entry name" value="ELECTRON TRANSFER FLAVOPROTEIN BETA SUBUNIT LYSINE METHYLTRANSFERASE"/>
    <property type="match status" value="1"/>
</dbReference>
<dbReference type="PANTHER" id="PTHR43648:SF1">
    <property type="entry name" value="ELECTRON TRANSFER FLAVOPROTEIN BETA SUBUNIT LYSINE METHYLTRANSFERASE"/>
    <property type="match status" value="1"/>
</dbReference>
<dbReference type="Pfam" id="PF06325">
    <property type="entry name" value="PrmA"/>
    <property type="match status" value="1"/>
</dbReference>
<dbReference type="PIRSF" id="PIRSF000401">
    <property type="entry name" value="RPL11_MTase"/>
    <property type="match status" value="1"/>
</dbReference>
<dbReference type="SUPFAM" id="SSF53335">
    <property type="entry name" value="S-adenosyl-L-methionine-dependent methyltransferases"/>
    <property type="match status" value="1"/>
</dbReference>
<evidence type="ECO:0000255" key="1">
    <source>
        <dbReference type="HAMAP-Rule" id="MF_00735"/>
    </source>
</evidence>
<protein>
    <recommendedName>
        <fullName evidence="1">Ribosomal protein L11 methyltransferase</fullName>
        <shortName evidence="1">L11 Mtase</shortName>
        <ecNumber evidence="1">2.1.1.-</ecNumber>
    </recommendedName>
</protein>